<accession>A6TAC4</accession>
<organism>
    <name type="scientific">Klebsiella pneumoniae subsp. pneumoniae (strain ATCC 700721 / MGH 78578)</name>
    <dbReference type="NCBI Taxonomy" id="272620"/>
    <lineage>
        <taxon>Bacteria</taxon>
        <taxon>Pseudomonadati</taxon>
        <taxon>Pseudomonadota</taxon>
        <taxon>Gammaproteobacteria</taxon>
        <taxon>Enterobacterales</taxon>
        <taxon>Enterobacteriaceae</taxon>
        <taxon>Klebsiella/Raoultella group</taxon>
        <taxon>Klebsiella</taxon>
        <taxon>Klebsiella pneumoniae complex</taxon>
    </lineage>
</organism>
<name>HOA_KLEP7</name>
<evidence type="ECO:0000255" key="1">
    <source>
        <dbReference type="HAMAP-Rule" id="MF_01656"/>
    </source>
</evidence>
<gene>
    <name evidence="1" type="primary">mhpE</name>
    <name type="ordered locus">KPN78578_20840</name>
    <name type="ORF">KPN_02117</name>
</gene>
<keyword id="KW-0058">Aromatic hydrocarbons catabolism</keyword>
<keyword id="KW-0456">Lyase</keyword>
<keyword id="KW-0464">Manganese</keyword>
<keyword id="KW-0479">Metal-binding</keyword>
<sequence length="338" mass="35981">MNGKKLYISDVTLRDGMHAIRHQYSLAQVQQIAGALDKAGVDSIEVAHGDGLQGSSFNYGFGAHSDIAWIEAAAAAVSQAKIATLLLPGIGTLHDLKAAYQAGARVVRVATHCSEADVAAQHIAFARELGMDTVGFLMMSHMISPQALAQQALKMESYGATCIYVVDSGGAMNMNDIRDRFRALKAVLKPETATGMHAHHNLSLGVANSIVAVEEGCDRIDASLAGMGAGAGNAPLEVFIAAADKLGWQHGTDLYALMNAADELVRPLQDRPVRVDRETLALGYAGVYSSFLRHSEAAAKRYGLSAVDILVELGKRRMVGGQEDMIVDVALDLLNRNK</sequence>
<feature type="chain" id="PRO_0000337807" description="4-hydroxy-2-oxovalerate aldolase">
    <location>
        <begin position="1"/>
        <end position="338"/>
    </location>
</feature>
<feature type="domain" description="Pyruvate carboxyltransferase" evidence="1">
    <location>
        <begin position="6"/>
        <end position="258"/>
    </location>
</feature>
<feature type="active site" description="Proton acceptor" evidence="1">
    <location>
        <position position="18"/>
    </location>
</feature>
<feature type="binding site" evidence="1">
    <location>
        <begin position="14"/>
        <end position="15"/>
    </location>
    <ligand>
        <name>substrate</name>
    </ligand>
</feature>
<feature type="binding site" evidence="1">
    <location>
        <position position="15"/>
    </location>
    <ligand>
        <name>Mn(2+)</name>
        <dbReference type="ChEBI" id="CHEBI:29035"/>
    </ligand>
</feature>
<feature type="binding site" evidence="1">
    <location>
        <position position="168"/>
    </location>
    <ligand>
        <name>substrate</name>
    </ligand>
</feature>
<feature type="binding site" evidence="1">
    <location>
        <position position="197"/>
    </location>
    <ligand>
        <name>Mn(2+)</name>
        <dbReference type="ChEBI" id="CHEBI:29035"/>
    </ligand>
</feature>
<feature type="binding site" evidence="1">
    <location>
        <position position="197"/>
    </location>
    <ligand>
        <name>substrate</name>
    </ligand>
</feature>
<feature type="binding site" evidence="1">
    <location>
        <position position="199"/>
    </location>
    <ligand>
        <name>Mn(2+)</name>
        <dbReference type="ChEBI" id="CHEBI:29035"/>
    </ligand>
</feature>
<feature type="binding site" evidence="1">
    <location>
        <position position="288"/>
    </location>
    <ligand>
        <name>substrate</name>
    </ligand>
</feature>
<feature type="site" description="Transition state stabilizer" evidence="1">
    <location>
        <position position="14"/>
    </location>
</feature>
<proteinExistence type="inferred from homology"/>
<protein>
    <recommendedName>
        <fullName evidence="1">4-hydroxy-2-oxovalerate aldolase</fullName>
        <shortName evidence="1">HOA</shortName>
        <ecNumber evidence="1">4.1.3.39</ecNumber>
    </recommendedName>
    <alternativeName>
        <fullName evidence="1">4-hydroxy-2-keto-pentanoic acid aldolase</fullName>
    </alternativeName>
    <alternativeName>
        <fullName evidence="1">4-hydroxy-2-oxopentanoate aldolase</fullName>
    </alternativeName>
</protein>
<comment type="function">
    <text evidence="1">Catalyzes the retro-aldol cleavage of 4-hydroxy-2-oxopentanoate to pyruvate and acetaldehyde. Is involved in the meta-cleavage pathway for the degradation of aromatic compounds.</text>
</comment>
<comment type="catalytic activity">
    <reaction evidence="1">
        <text>(S)-4-hydroxy-2-oxopentanoate = acetaldehyde + pyruvate</text>
        <dbReference type="Rhea" id="RHEA:22624"/>
        <dbReference type="ChEBI" id="CHEBI:15343"/>
        <dbReference type="ChEBI" id="CHEBI:15361"/>
        <dbReference type="ChEBI" id="CHEBI:73143"/>
        <dbReference type="EC" id="4.1.3.39"/>
    </reaction>
</comment>
<comment type="pathway">
    <text evidence="1">Aromatic compound metabolism; 3-phenylpropanoate degradation.</text>
</comment>
<comment type="subunit">
    <text evidence="1">Interacts with MhpF.</text>
</comment>
<comment type="similarity">
    <text evidence="1">Belongs to the 4-hydroxy-2-oxovalerate aldolase family.</text>
</comment>
<reference key="1">
    <citation type="submission" date="2006-09" db="EMBL/GenBank/DDBJ databases">
        <authorList>
            <consortium name="The Klebsiella pneumonia Genome Sequencing Project"/>
            <person name="McClelland M."/>
            <person name="Sanderson E.K."/>
            <person name="Spieth J."/>
            <person name="Clifton W.S."/>
            <person name="Latreille P."/>
            <person name="Sabo A."/>
            <person name="Pepin K."/>
            <person name="Bhonagiri V."/>
            <person name="Porwollik S."/>
            <person name="Ali J."/>
            <person name="Wilson R.K."/>
        </authorList>
    </citation>
    <scope>NUCLEOTIDE SEQUENCE [LARGE SCALE GENOMIC DNA]</scope>
    <source>
        <strain>ATCC 700721 / MGH 78578</strain>
    </source>
</reference>
<dbReference type="EC" id="4.1.3.39" evidence="1"/>
<dbReference type="EMBL" id="CP000647">
    <property type="protein sequence ID" value="ABR77545.1"/>
    <property type="molecule type" value="Genomic_DNA"/>
</dbReference>
<dbReference type="RefSeq" id="WP_015958581.1">
    <property type="nucleotide sequence ID" value="NC_009648.1"/>
</dbReference>
<dbReference type="SMR" id="A6TAC4"/>
<dbReference type="STRING" id="272620.KPN_02117"/>
<dbReference type="PaxDb" id="272620-KPN_02117"/>
<dbReference type="EnsemblBacteria" id="ABR77545">
    <property type="protein sequence ID" value="ABR77545"/>
    <property type="gene ID" value="KPN_02117"/>
</dbReference>
<dbReference type="KEGG" id="kpn:KPN_02117"/>
<dbReference type="HOGENOM" id="CLU_049173_0_0_6"/>
<dbReference type="UniPathway" id="UPA00714"/>
<dbReference type="Proteomes" id="UP000000265">
    <property type="component" value="Chromosome"/>
</dbReference>
<dbReference type="GO" id="GO:0003852">
    <property type="term" value="F:2-isopropylmalate synthase activity"/>
    <property type="evidence" value="ECO:0007669"/>
    <property type="project" value="TreeGrafter"/>
</dbReference>
<dbReference type="GO" id="GO:0008701">
    <property type="term" value="F:4-hydroxy-2-oxovalerate aldolase activity"/>
    <property type="evidence" value="ECO:0007669"/>
    <property type="project" value="UniProtKB-UniRule"/>
</dbReference>
<dbReference type="GO" id="GO:0030145">
    <property type="term" value="F:manganese ion binding"/>
    <property type="evidence" value="ECO:0007669"/>
    <property type="project" value="UniProtKB-UniRule"/>
</dbReference>
<dbReference type="GO" id="GO:0019380">
    <property type="term" value="P:3-phenylpropionate catabolic process"/>
    <property type="evidence" value="ECO:0007669"/>
    <property type="project" value="UniProtKB-UniRule"/>
</dbReference>
<dbReference type="GO" id="GO:0009098">
    <property type="term" value="P:L-leucine biosynthetic process"/>
    <property type="evidence" value="ECO:0007669"/>
    <property type="project" value="TreeGrafter"/>
</dbReference>
<dbReference type="CDD" id="cd07943">
    <property type="entry name" value="DRE_TIM_HOA"/>
    <property type="match status" value="1"/>
</dbReference>
<dbReference type="FunFam" id="1.10.8.60:FF:000042">
    <property type="entry name" value="4-hydroxy-2-oxovalerate aldolase"/>
    <property type="match status" value="1"/>
</dbReference>
<dbReference type="Gene3D" id="1.10.8.60">
    <property type="match status" value="1"/>
</dbReference>
<dbReference type="Gene3D" id="3.20.20.70">
    <property type="entry name" value="Aldolase class I"/>
    <property type="match status" value="1"/>
</dbReference>
<dbReference type="HAMAP" id="MF_01656">
    <property type="entry name" value="HOA"/>
    <property type="match status" value="1"/>
</dbReference>
<dbReference type="InterPro" id="IPR050073">
    <property type="entry name" value="2-IPM_HCS-like"/>
</dbReference>
<dbReference type="InterPro" id="IPR017629">
    <property type="entry name" value="4OH_2_O-val_aldolase"/>
</dbReference>
<dbReference type="InterPro" id="IPR013785">
    <property type="entry name" value="Aldolase_TIM"/>
</dbReference>
<dbReference type="InterPro" id="IPR012425">
    <property type="entry name" value="DmpG_comm"/>
</dbReference>
<dbReference type="InterPro" id="IPR035685">
    <property type="entry name" value="DRE_TIM_HOA"/>
</dbReference>
<dbReference type="InterPro" id="IPR000891">
    <property type="entry name" value="PYR_CT"/>
</dbReference>
<dbReference type="NCBIfam" id="TIGR03217">
    <property type="entry name" value="4OH_2_O_val_ald"/>
    <property type="match status" value="1"/>
</dbReference>
<dbReference type="NCBIfam" id="NF006049">
    <property type="entry name" value="PRK08195.1"/>
    <property type="match status" value="1"/>
</dbReference>
<dbReference type="PANTHER" id="PTHR10277:SF9">
    <property type="entry name" value="2-ISOPROPYLMALATE SYNTHASE 1, CHLOROPLASTIC-RELATED"/>
    <property type="match status" value="1"/>
</dbReference>
<dbReference type="PANTHER" id="PTHR10277">
    <property type="entry name" value="HOMOCITRATE SYNTHASE-RELATED"/>
    <property type="match status" value="1"/>
</dbReference>
<dbReference type="Pfam" id="PF07836">
    <property type="entry name" value="DmpG_comm"/>
    <property type="match status" value="1"/>
</dbReference>
<dbReference type="Pfam" id="PF00682">
    <property type="entry name" value="HMGL-like"/>
    <property type="match status" value="1"/>
</dbReference>
<dbReference type="SUPFAM" id="SSF51569">
    <property type="entry name" value="Aldolase"/>
    <property type="match status" value="1"/>
</dbReference>
<dbReference type="SUPFAM" id="SSF89000">
    <property type="entry name" value="post-HMGL domain-like"/>
    <property type="match status" value="1"/>
</dbReference>
<dbReference type="PROSITE" id="PS50991">
    <property type="entry name" value="PYR_CT"/>
    <property type="match status" value="1"/>
</dbReference>